<protein>
    <recommendedName>
        <fullName>Pre-mRNA-splicing factor slu7</fullName>
    </recommendedName>
</protein>
<keyword id="KW-0175">Coiled coil</keyword>
<keyword id="KW-0479">Metal-binding</keyword>
<keyword id="KW-0507">mRNA processing</keyword>
<keyword id="KW-0508">mRNA splicing</keyword>
<keyword id="KW-0539">Nucleus</keyword>
<keyword id="KW-1185">Reference proteome</keyword>
<keyword id="KW-0747">Spliceosome</keyword>
<keyword id="KW-0862">Zinc</keyword>
<keyword id="KW-0863">Zinc-finger</keyword>
<evidence type="ECO:0000250" key="1"/>
<evidence type="ECO:0000255" key="2"/>
<evidence type="ECO:0000256" key="3">
    <source>
        <dbReference type="SAM" id="MobiDB-lite"/>
    </source>
</evidence>
<evidence type="ECO:0000305" key="4"/>
<organism>
    <name type="scientific">Dictyostelium discoideum</name>
    <name type="common">Social amoeba</name>
    <dbReference type="NCBI Taxonomy" id="44689"/>
    <lineage>
        <taxon>Eukaryota</taxon>
        <taxon>Amoebozoa</taxon>
        <taxon>Evosea</taxon>
        <taxon>Eumycetozoa</taxon>
        <taxon>Dictyostelia</taxon>
        <taxon>Dictyosteliales</taxon>
        <taxon>Dictyosteliaceae</taxon>
        <taxon>Dictyostelium</taxon>
    </lineage>
</organism>
<dbReference type="EMBL" id="AAFI02000043">
    <property type="protein sequence ID" value="EAL66510.1"/>
    <property type="molecule type" value="Genomic_DNA"/>
</dbReference>
<dbReference type="RefSeq" id="XP_640489.1">
    <property type="nucleotide sequence ID" value="XM_635397.1"/>
</dbReference>
<dbReference type="SMR" id="Q54TA0"/>
<dbReference type="FunCoup" id="Q54TA0">
    <property type="interactions" value="889"/>
</dbReference>
<dbReference type="STRING" id="44689.Q54TA0"/>
<dbReference type="PaxDb" id="44689-DDB0233423"/>
<dbReference type="EnsemblProtists" id="EAL66510">
    <property type="protein sequence ID" value="EAL66510"/>
    <property type="gene ID" value="DDB_G0281901"/>
</dbReference>
<dbReference type="GeneID" id="8623303"/>
<dbReference type="KEGG" id="ddi:DDB_G0281901"/>
<dbReference type="dictyBase" id="DDB_G0281901">
    <property type="gene designation" value="slu7"/>
</dbReference>
<dbReference type="VEuPathDB" id="AmoebaDB:DDB_G0281901"/>
<dbReference type="eggNOG" id="KOG2560">
    <property type="taxonomic scope" value="Eukaryota"/>
</dbReference>
<dbReference type="HOGENOM" id="CLU_019317_2_0_1"/>
<dbReference type="InParanoid" id="Q54TA0"/>
<dbReference type="OMA" id="KYAWESQ"/>
<dbReference type="PhylomeDB" id="Q54TA0"/>
<dbReference type="Reactome" id="R-DDI-72163">
    <property type="pathway name" value="mRNA Splicing - Major Pathway"/>
</dbReference>
<dbReference type="PRO" id="PR:Q54TA0"/>
<dbReference type="Proteomes" id="UP000002195">
    <property type="component" value="Chromosome 3"/>
</dbReference>
<dbReference type="GO" id="GO:0005681">
    <property type="term" value="C:spliceosomal complex"/>
    <property type="evidence" value="ECO:0000250"/>
    <property type="project" value="dictyBase"/>
</dbReference>
<dbReference type="GO" id="GO:0030628">
    <property type="term" value="F:pre-mRNA 3'-splice site binding"/>
    <property type="evidence" value="ECO:0007669"/>
    <property type="project" value="InterPro"/>
</dbReference>
<dbReference type="GO" id="GO:0008270">
    <property type="term" value="F:zinc ion binding"/>
    <property type="evidence" value="ECO:0007669"/>
    <property type="project" value="UniProtKB-KW"/>
</dbReference>
<dbReference type="GO" id="GO:0000398">
    <property type="term" value="P:mRNA splicing, via spliceosome"/>
    <property type="evidence" value="ECO:0007669"/>
    <property type="project" value="InterPro"/>
</dbReference>
<dbReference type="GO" id="GO:0008380">
    <property type="term" value="P:RNA splicing"/>
    <property type="evidence" value="ECO:0000318"/>
    <property type="project" value="GO_Central"/>
</dbReference>
<dbReference type="GO" id="GO:0000375">
    <property type="term" value="P:RNA splicing, via transesterification reactions"/>
    <property type="evidence" value="ECO:0000250"/>
    <property type="project" value="dictyBase"/>
</dbReference>
<dbReference type="InterPro" id="IPR021715">
    <property type="entry name" value="Slu7_dom"/>
</dbReference>
<dbReference type="InterPro" id="IPR039974">
    <property type="entry name" value="Splicing_factor_SLU7"/>
</dbReference>
<dbReference type="PANTHER" id="PTHR12942:SF2">
    <property type="entry name" value="PRE-MRNA-SPLICING FACTOR SLU7"/>
    <property type="match status" value="1"/>
</dbReference>
<dbReference type="PANTHER" id="PTHR12942">
    <property type="entry name" value="STEP II SPLICING FACTOR SLU7"/>
    <property type="match status" value="1"/>
</dbReference>
<dbReference type="Pfam" id="PF11708">
    <property type="entry name" value="Slu7"/>
    <property type="match status" value="1"/>
</dbReference>
<comment type="function">
    <text evidence="1">Participates in the second catalytic step of pre-mRNA splicing, when the free hydroxyl group of exon I attacks the 3'-splice site to generate spliced mRNA and the excised lariat intron.</text>
</comment>
<comment type="subunit">
    <text evidence="1">Associated with the spliceosome.</text>
</comment>
<comment type="subcellular location">
    <subcellularLocation>
        <location evidence="1">Nucleus</location>
    </subcellularLocation>
</comment>
<comment type="similarity">
    <text evidence="4">Belongs to the SLU7 family.</text>
</comment>
<proteinExistence type="evidence at transcript level"/>
<feature type="chain" id="PRO_0000331203" description="Pre-mRNA-splicing factor slu7">
    <location>
        <begin position="1"/>
        <end position="558"/>
    </location>
</feature>
<feature type="zinc finger region" description="CCHC-type">
    <location>
        <begin position="94"/>
        <end position="111"/>
    </location>
</feature>
<feature type="region of interest" description="Disordered" evidence="3">
    <location>
        <begin position="1"/>
        <end position="41"/>
    </location>
</feature>
<feature type="region of interest" description="Disordered" evidence="3">
    <location>
        <begin position="428"/>
        <end position="532"/>
    </location>
</feature>
<feature type="region of interest" description="Disordered" evidence="3">
    <location>
        <begin position="539"/>
        <end position="558"/>
    </location>
</feature>
<feature type="coiled-coil region" evidence="2">
    <location>
        <begin position="474"/>
        <end position="514"/>
    </location>
</feature>
<feature type="compositionally biased region" description="Basic and acidic residues" evidence="3">
    <location>
        <begin position="10"/>
        <end position="25"/>
    </location>
</feature>
<feature type="compositionally biased region" description="Low complexity" evidence="3">
    <location>
        <begin position="430"/>
        <end position="442"/>
    </location>
</feature>
<feature type="compositionally biased region" description="Low complexity" evidence="3">
    <location>
        <begin position="450"/>
        <end position="465"/>
    </location>
</feature>
<feature type="compositionally biased region" description="Basic and acidic residues" evidence="3">
    <location>
        <begin position="466"/>
        <end position="478"/>
    </location>
</feature>
<feature type="compositionally biased region" description="Basic residues" evidence="3">
    <location>
        <begin position="479"/>
        <end position="488"/>
    </location>
</feature>
<feature type="compositionally biased region" description="Basic and acidic residues" evidence="3">
    <location>
        <begin position="489"/>
        <end position="519"/>
    </location>
</feature>
<feature type="compositionally biased region" description="Basic and acidic residues" evidence="3">
    <location>
        <begin position="545"/>
        <end position="558"/>
    </location>
</feature>
<reference key="1">
    <citation type="journal article" date="2005" name="Nature">
        <title>The genome of the social amoeba Dictyostelium discoideum.</title>
        <authorList>
            <person name="Eichinger L."/>
            <person name="Pachebat J.A."/>
            <person name="Gloeckner G."/>
            <person name="Rajandream M.A."/>
            <person name="Sucgang R."/>
            <person name="Berriman M."/>
            <person name="Song J."/>
            <person name="Olsen R."/>
            <person name="Szafranski K."/>
            <person name="Xu Q."/>
            <person name="Tunggal B."/>
            <person name="Kummerfeld S."/>
            <person name="Madera M."/>
            <person name="Konfortov B.A."/>
            <person name="Rivero F."/>
            <person name="Bankier A.T."/>
            <person name="Lehmann R."/>
            <person name="Hamlin N."/>
            <person name="Davies R."/>
            <person name="Gaudet P."/>
            <person name="Fey P."/>
            <person name="Pilcher K."/>
            <person name="Chen G."/>
            <person name="Saunders D."/>
            <person name="Sodergren E.J."/>
            <person name="Davis P."/>
            <person name="Kerhornou A."/>
            <person name="Nie X."/>
            <person name="Hall N."/>
            <person name="Anjard C."/>
            <person name="Hemphill L."/>
            <person name="Bason N."/>
            <person name="Farbrother P."/>
            <person name="Desany B."/>
            <person name="Just E."/>
            <person name="Morio T."/>
            <person name="Rost R."/>
            <person name="Churcher C.M."/>
            <person name="Cooper J."/>
            <person name="Haydock S."/>
            <person name="van Driessche N."/>
            <person name="Cronin A."/>
            <person name="Goodhead I."/>
            <person name="Muzny D.M."/>
            <person name="Mourier T."/>
            <person name="Pain A."/>
            <person name="Lu M."/>
            <person name="Harper D."/>
            <person name="Lindsay R."/>
            <person name="Hauser H."/>
            <person name="James K.D."/>
            <person name="Quiles M."/>
            <person name="Madan Babu M."/>
            <person name="Saito T."/>
            <person name="Buchrieser C."/>
            <person name="Wardroper A."/>
            <person name="Felder M."/>
            <person name="Thangavelu M."/>
            <person name="Johnson D."/>
            <person name="Knights A."/>
            <person name="Loulseged H."/>
            <person name="Mungall K.L."/>
            <person name="Oliver K."/>
            <person name="Price C."/>
            <person name="Quail M.A."/>
            <person name="Urushihara H."/>
            <person name="Hernandez J."/>
            <person name="Rabbinowitsch E."/>
            <person name="Steffen D."/>
            <person name="Sanders M."/>
            <person name="Ma J."/>
            <person name="Kohara Y."/>
            <person name="Sharp S."/>
            <person name="Simmonds M.N."/>
            <person name="Spiegler S."/>
            <person name="Tivey A."/>
            <person name="Sugano S."/>
            <person name="White B."/>
            <person name="Walker D."/>
            <person name="Woodward J.R."/>
            <person name="Winckler T."/>
            <person name="Tanaka Y."/>
            <person name="Shaulsky G."/>
            <person name="Schleicher M."/>
            <person name="Weinstock G.M."/>
            <person name="Rosenthal A."/>
            <person name="Cox E.C."/>
            <person name="Chisholm R.L."/>
            <person name="Gibbs R.A."/>
            <person name="Loomis W.F."/>
            <person name="Platzer M."/>
            <person name="Kay R.R."/>
            <person name="Williams J.G."/>
            <person name="Dear P.H."/>
            <person name="Noegel A.A."/>
            <person name="Barrell B.G."/>
            <person name="Kuspa A."/>
        </authorList>
    </citation>
    <scope>NUCLEOTIDE SEQUENCE [LARGE SCALE GENOMIC DNA]</scope>
    <source>
        <strain>AX4</strain>
    </source>
</reference>
<gene>
    <name type="primary">slu7</name>
    <name type="ORF">DDB_G0281901</name>
</gene>
<sequence length="558" mass="64719">MASSISHRKTRDEYKKEKELDEARKAGNAPAELDEEGKEINPHIPEYILKAPWYLNANKPSLKHQRGVTKKEMDKGWYLRGATTGEAATKFRKGACENCGAMTHKTKDCCERPRKLGAKFTNDDIKPDEVIQKLELDYDSKRDPYNGYDPSSYKEVMDIYEKADTERKKKKLQELIKQHGGGGDKKTPDVDETLSKELMDNEEKEGSYDSETVAPIQKLDQKSRTTIRNLRIREDTAKYLYNLDVNSAFYEPKSRSMRDNPLPNANPNDIKFAGDNFARTSGETKEFRDLQRFAWEAQEKGQDVDISSAPSQAALLHADFLRKKEQLKQQTRNQLLTKYGGEEHLLKQEEIDKVPQSEIYTEYSSSGKLIKGEEKIVKSKYEEDVFLNNHKSIWGSYWENGQWGFACCRQLIKNAYCTGEKGKLLREKQLQQQQQHHIQQENQQDDDDNNTTTTTTTTTTSLLEQHLNKSNEDNDKHNKKEGKRKDKKERKEKEEKLKKALKDQDEENKKSVEKDERNIKYNSLSADDYNVSEEQMEAYNLKRKRSDDPMANFKDDSD</sequence>
<accession>Q54TA0</accession>
<name>SLU7_DICDI</name>